<evidence type="ECO:0000255" key="1">
    <source>
        <dbReference type="HAMAP-Rule" id="MF_00364"/>
    </source>
</evidence>
<dbReference type="EC" id="3.2.1.52" evidence="1"/>
<dbReference type="EMBL" id="CP000746">
    <property type="protein sequence ID" value="ABR73591.1"/>
    <property type="molecule type" value="Genomic_DNA"/>
</dbReference>
<dbReference type="RefSeq" id="WP_011978867.1">
    <property type="nucleotide sequence ID" value="NC_009655.1"/>
</dbReference>
<dbReference type="SMR" id="A6VKU4"/>
<dbReference type="STRING" id="339671.Asuc_0211"/>
<dbReference type="CAZy" id="GH3">
    <property type="family name" value="Glycoside Hydrolase Family 3"/>
</dbReference>
<dbReference type="KEGG" id="asu:Asuc_0211"/>
<dbReference type="eggNOG" id="COG1472">
    <property type="taxonomic scope" value="Bacteria"/>
</dbReference>
<dbReference type="HOGENOM" id="CLU_008392_0_0_6"/>
<dbReference type="OrthoDB" id="9786661at2"/>
<dbReference type="UniPathway" id="UPA00544"/>
<dbReference type="Proteomes" id="UP000001114">
    <property type="component" value="Chromosome"/>
</dbReference>
<dbReference type="GO" id="GO:0005737">
    <property type="term" value="C:cytoplasm"/>
    <property type="evidence" value="ECO:0007669"/>
    <property type="project" value="UniProtKB-SubCell"/>
</dbReference>
<dbReference type="GO" id="GO:0004563">
    <property type="term" value="F:beta-N-acetylhexosaminidase activity"/>
    <property type="evidence" value="ECO:0007669"/>
    <property type="project" value="UniProtKB-UniRule"/>
</dbReference>
<dbReference type="GO" id="GO:0005975">
    <property type="term" value="P:carbohydrate metabolic process"/>
    <property type="evidence" value="ECO:0007669"/>
    <property type="project" value="InterPro"/>
</dbReference>
<dbReference type="GO" id="GO:0051301">
    <property type="term" value="P:cell division"/>
    <property type="evidence" value="ECO:0007669"/>
    <property type="project" value="UniProtKB-KW"/>
</dbReference>
<dbReference type="GO" id="GO:0071555">
    <property type="term" value="P:cell wall organization"/>
    <property type="evidence" value="ECO:0007669"/>
    <property type="project" value="UniProtKB-KW"/>
</dbReference>
<dbReference type="GO" id="GO:0009252">
    <property type="term" value="P:peptidoglycan biosynthetic process"/>
    <property type="evidence" value="ECO:0007669"/>
    <property type="project" value="UniProtKB-KW"/>
</dbReference>
<dbReference type="GO" id="GO:0009254">
    <property type="term" value="P:peptidoglycan turnover"/>
    <property type="evidence" value="ECO:0007669"/>
    <property type="project" value="UniProtKB-UniRule"/>
</dbReference>
<dbReference type="GO" id="GO:0008360">
    <property type="term" value="P:regulation of cell shape"/>
    <property type="evidence" value="ECO:0007669"/>
    <property type="project" value="UniProtKB-KW"/>
</dbReference>
<dbReference type="FunFam" id="3.20.20.300:FF:000001">
    <property type="entry name" value="Beta-hexosaminidase"/>
    <property type="match status" value="1"/>
</dbReference>
<dbReference type="Gene3D" id="3.20.20.300">
    <property type="entry name" value="Glycoside hydrolase, family 3, N-terminal domain"/>
    <property type="match status" value="1"/>
</dbReference>
<dbReference type="HAMAP" id="MF_00364">
    <property type="entry name" value="NagZ"/>
    <property type="match status" value="1"/>
</dbReference>
<dbReference type="InterPro" id="IPR022956">
    <property type="entry name" value="Beta_hexosaminidase_bac"/>
</dbReference>
<dbReference type="InterPro" id="IPR001764">
    <property type="entry name" value="Glyco_hydro_3_N"/>
</dbReference>
<dbReference type="InterPro" id="IPR036962">
    <property type="entry name" value="Glyco_hydro_3_N_sf"/>
</dbReference>
<dbReference type="InterPro" id="IPR017853">
    <property type="entry name" value="Glycoside_hydrolase_SF"/>
</dbReference>
<dbReference type="InterPro" id="IPR050226">
    <property type="entry name" value="NagZ_Beta-hexosaminidase"/>
</dbReference>
<dbReference type="NCBIfam" id="NF003740">
    <property type="entry name" value="PRK05337.1"/>
    <property type="match status" value="1"/>
</dbReference>
<dbReference type="PANTHER" id="PTHR30480:SF13">
    <property type="entry name" value="BETA-HEXOSAMINIDASE"/>
    <property type="match status" value="1"/>
</dbReference>
<dbReference type="PANTHER" id="PTHR30480">
    <property type="entry name" value="BETA-HEXOSAMINIDASE-RELATED"/>
    <property type="match status" value="1"/>
</dbReference>
<dbReference type="Pfam" id="PF00933">
    <property type="entry name" value="Glyco_hydro_3"/>
    <property type="match status" value="1"/>
</dbReference>
<dbReference type="SUPFAM" id="SSF51445">
    <property type="entry name" value="(Trans)glycosidases"/>
    <property type="match status" value="1"/>
</dbReference>
<proteinExistence type="inferred from homology"/>
<gene>
    <name evidence="1" type="primary">nagZ</name>
    <name type="ordered locus">Asuc_0211</name>
</gene>
<feature type="chain" id="PRO_1000072095" description="Beta-hexosaminidase">
    <location>
        <begin position="1"/>
        <end position="346"/>
    </location>
</feature>
<feature type="active site" description="Proton donor/acceptor" evidence="1">
    <location>
        <position position="177"/>
    </location>
</feature>
<feature type="active site" description="Nucleophile" evidence="1">
    <location>
        <position position="249"/>
    </location>
</feature>
<feature type="binding site" evidence="1">
    <location>
        <position position="62"/>
    </location>
    <ligand>
        <name>substrate</name>
    </ligand>
</feature>
<feature type="binding site" evidence="1">
    <location>
        <position position="70"/>
    </location>
    <ligand>
        <name>substrate</name>
    </ligand>
</feature>
<feature type="binding site" evidence="1">
    <location>
        <position position="134"/>
    </location>
    <ligand>
        <name>substrate</name>
    </ligand>
</feature>
<feature type="binding site" evidence="1">
    <location>
        <begin position="164"/>
        <end position="165"/>
    </location>
    <ligand>
        <name>substrate</name>
    </ligand>
</feature>
<feature type="site" description="Important for catalytic activity" evidence="1">
    <location>
        <position position="175"/>
    </location>
</feature>
<keyword id="KW-0131">Cell cycle</keyword>
<keyword id="KW-0132">Cell division</keyword>
<keyword id="KW-0133">Cell shape</keyword>
<keyword id="KW-0961">Cell wall biogenesis/degradation</keyword>
<keyword id="KW-0963">Cytoplasm</keyword>
<keyword id="KW-0326">Glycosidase</keyword>
<keyword id="KW-0378">Hydrolase</keyword>
<keyword id="KW-0573">Peptidoglycan synthesis</keyword>
<keyword id="KW-1185">Reference proteome</keyword>
<protein>
    <recommendedName>
        <fullName evidence="1">Beta-hexosaminidase</fullName>
        <ecNumber evidence="1">3.2.1.52</ecNumber>
    </recommendedName>
    <alternativeName>
        <fullName evidence="1">Beta-N-acetylhexosaminidase</fullName>
    </alternativeName>
    <alternativeName>
        <fullName evidence="1">N-acetyl-beta-glucosaminidase</fullName>
    </alternativeName>
</protein>
<sequence>MSTLLIDLKGQTLRQEEVELLEHPLVAGLILFTRNFYDRPQIQALVKDIRQRVKKPLLITVDQEGGRVQRFRDGFTKLPAMQSFAALIQEPEQQLATAKEAGWQMAAEMTALDIDLSFAPVLDLGHECKAIGDRSFCSDAESVFRLASAFIDGMHAAGMATTGKHFPGHGHVLADSHLETPFDNRPSAVIFERDIRPFQRLIAQNKLNAVMPAHVIYTDCDDQPASGSKYWLQDILRRKLGFHGAVFSDDLGMKGAGFMGDFVTRSEKALSAGCDLLLLCNEPDGVVQVLDNLKLNESRPHFEARQQRLKTLFKKKSFNWTELTQTEKWLKNTQKLTALQAQWQSS</sequence>
<organism>
    <name type="scientific">Actinobacillus succinogenes (strain ATCC 55618 / DSM 22257 / CCUG 43843 / 130Z)</name>
    <dbReference type="NCBI Taxonomy" id="339671"/>
    <lineage>
        <taxon>Bacteria</taxon>
        <taxon>Pseudomonadati</taxon>
        <taxon>Pseudomonadota</taxon>
        <taxon>Gammaproteobacteria</taxon>
        <taxon>Pasteurellales</taxon>
        <taxon>Pasteurellaceae</taxon>
        <taxon>Actinobacillus</taxon>
    </lineage>
</organism>
<reference key="1">
    <citation type="journal article" date="2010" name="BMC Genomics">
        <title>A genomic perspective on the potential of Actinobacillus succinogenes for industrial succinate production.</title>
        <authorList>
            <person name="McKinlay J.B."/>
            <person name="Laivenieks M."/>
            <person name="Schindler B.D."/>
            <person name="McKinlay A.A."/>
            <person name="Siddaramappa S."/>
            <person name="Challacombe J.F."/>
            <person name="Lowry S.R."/>
            <person name="Clum A."/>
            <person name="Lapidus A.L."/>
            <person name="Burkhart K.B."/>
            <person name="Harkins V."/>
            <person name="Vieille C."/>
        </authorList>
    </citation>
    <scope>NUCLEOTIDE SEQUENCE [LARGE SCALE GENOMIC DNA]</scope>
    <source>
        <strain>ATCC 55618 / DSM 22257 / CCUG 43843 / 130Z</strain>
    </source>
</reference>
<name>NAGZ_ACTSZ</name>
<accession>A6VKU4</accession>
<comment type="function">
    <text evidence="1">Plays a role in peptidoglycan recycling by cleaving the terminal beta-1,4-linked N-acetylglucosamine (GlcNAc) from peptide-linked peptidoglycan fragments, giving rise to free GlcNAc, anhydro-N-acetylmuramic acid and anhydro-N-acetylmuramic acid-linked peptides.</text>
</comment>
<comment type="catalytic activity">
    <reaction evidence="1">
        <text>Hydrolysis of terminal non-reducing N-acetyl-D-hexosamine residues in N-acetyl-beta-D-hexosaminides.</text>
        <dbReference type="EC" id="3.2.1.52"/>
    </reaction>
</comment>
<comment type="pathway">
    <text evidence="1">Cell wall biogenesis; peptidoglycan recycling.</text>
</comment>
<comment type="subcellular location">
    <subcellularLocation>
        <location evidence="1">Cytoplasm</location>
    </subcellularLocation>
</comment>
<comment type="similarity">
    <text evidence="1">Belongs to the glycosyl hydrolase 3 family. NagZ subfamily.</text>
</comment>